<protein>
    <recommendedName>
        <fullName>Virulence-associated protein B</fullName>
    </recommendedName>
</protein>
<gene>
    <name type="primary">vapB</name>
</gene>
<reference key="1">
    <citation type="journal article" date="1991" name="J. Gen. Microbiol.">
        <title>Identification of three gene regions associated with virulence in Dichelobacter nodosus, the causative agent of ovine footrot.</title>
        <authorList>
            <person name="Katz M.E."/>
            <person name="Howarth P.M."/>
            <person name="Yong W.K."/>
            <person name="Riffkin G.G."/>
            <person name="Depiazzi L.J."/>
            <person name="Rood J.I."/>
        </authorList>
    </citation>
    <scope>NUCLEOTIDE SEQUENCE [GENOMIC DNA]</scope>
    <source>
        <strain>A198</strain>
    </source>
</reference>
<reference key="2">
    <citation type="journal article" date="1992" name="Infect. Immun.">
        <title>Molecular characterization of a genomic region associated with virulence in Dichelobacter nodosus.</title>
        <authorList>
            <person name="Katz M.E."/>
            <person name="Rood J.I."/>
            <person name="Strugnell R.A."/>
        </authorList>
    </citation>
    <scope>NUCLEOTIDE SEQUENCE [GENOMIC DNA]</scope>
    <source>
        <strain>A198</strain>
    </source>
</reference>
<reference key="3">
    <citation type="journal article" date="1994" name="J. Bacteriol.">
        <title>Genetic organization of the duplicated vap region of the Dichelobacter nodosus genome.</title>
        <authorList>
            <person name="Katz M.E."/>
            <person name="Wright C.L."/>
            <person name="Gartside T.S."/>
            <person name="Cheetham B.F."/>
            <person name="Doidge C.V."/>
            <person name="Moses E.K."/>
            <person name="Rood J.I."/>
        </authorList>
    </citation>
    <scope>NUCLEOTIDE SEQUENCE [GENOMIC DNA]</scope>
    <source>
        <strain>A198</strain>
    </source>
</reference>
<reference key="4">
    <citation type="journal article" date="1996" name="Vet. Microbiol.">
        <title>Comparison of gene probe and conventional methods for the differentiation of ovine footrot isolates of Dichelobacter nodosus.</title>
        <authorList>
            <person name="Rood J.I."/>
            <person name="Howarth P.A."/>
            <person name="Haring V."/>
            <person name="Billington S.J."/>
            <person name="Yong W.K."/>
            <person name="Liu D."/>
            <person name="Palmer M.A."/>
            <person name="Pitman D.R."/>
            <person name="Links I."/>
            <person name="Stewart D.J."/>
            <person name="Vaughan J.A."/>
        </authorList>
    </citation>
    <scope>NUCLEOTIDE SEQUENCE [GENOMIC DNA]</scope>
    <source>
        <strain>HA338</strain>
    </source>
</reference>
<comment type="similarity">
    <text evidence="2">Belongs to the VapB family.</text>
</comment>
<keyword id="KW-0238">DNA-binding</keyword>
<keyword id="KW-0843">Virulence</keyword>
<evidence type="ECO:0000255" key="1">
    <source>
        <dbReference type="PROSITE-ProRule" id="PRU01076"/>
    </source>
</evidence>
<evidence type="ECO:0000305" key="2"/>
<name>VAPB_DICNO</name>
<dbReference type="EMBL" id="L31763">
    <property type="protein sequence ID" value="AAB00942.1"/>
    <property type="molecule type" value="Genomic_DNA"/>
</dbReference>
<dbReference type="EMBL" id="L22308">
    <property type="protein sequence ID" value="AAA20206.1"/>
    <property type="molecule type" value="Unassigned_DNA"/>
</dbReference>
<dbReference type="EMBL" id="M74565">
    <property type="protein sequence ID" value="AAA23350.1"/>
    <property type="molecule type" value="Genomic_DNA"/>
</dbReference>
<dbReference type="EMBL" id="U39547">
    <property type="protein sequence ID" value="AAC44626.1"/>
    <property type="molecule type" value="Genomic_DNA"/>
</dbReference>
<dbReference type="PIR" id="C49205">
    <property type="entry name" value="C49205"/>
</dbReference>
<dbReference type="RefSeq" id="WP_012030622.1">
    <property type="nucleotide sequence ID" value="NZ_SRJB01000012.1"/>
</dbReference>
<dbReference type="SMR" id="Q46558"/>
<dbReference type="OMA" id="PKEYQVD"/>
<dbReference type="GO" id="GO:0003677">
    <property type="term" value="F:DNA binding"/>
    <property type="evidence" value="ECO:0007669"/>
    <property type="project" value="UniProtKB-KW"/>
</dbReference>
<dbReference type="Gene3D" id="2.10.260.10">
    <property type="match status" value="1"/>
</dbReference>
<dbReference type="InterPro" id="IPR047976">
    <property type="entry name" value="Anti_VapB2-like"/>
</dbReference>
<dbReference type="InterPro" id="IPR007159">
    <property type="entry name" value="SpoVT-AbrB_dom"/>
</dbReference>
<dbReference type="InterPro" id="IPR037914">
    <property type="entry name" value="SpoVT-AbrB_sf"/>
</dbReference>
<dbReference type="InterPro" id="IPR051734">
    <property type="entry name" value="VapB_TA_antitoxins"/>
</dbReference>
<dbReference type="NCBIfam" id="NF040493">
    <property type="entry name" value="TA_anti_VapB"/>
    <property type="match status" value="1"/>
</dbReference>
<dbReference type="PANTHER" id="PTHR37550">
    <property type="entry name" value="ANTITOXIN VAPB1"/>
    <property type="match status" value="1"/>
</dbReference>
<dbReference type="PANTHER" id="PTHR37550:SF3">
    <property type="entry name" value="ANTITOXIN VAPB1"/>
    <property type="match status" value="1"/>
</dbReference>
<dbReference type="Pfam" id="PF04014">
    <property type="entry name" value="MazE_antitoxin"/>
    <property type="match status" value="1"/>
</dbReference>
<dbReference type="SMART" id="SM00966">
    <property type="entry name" value="SpoVT_AbrB"/>
    <property type="match status" value="1"/>
</dbReference>
<dbReference type="SUPFAM" id="SSF89447">
    <property type="entry name" value="AbrB/MazE/MraZ-like"/>
    <property type="match status" value="1"/>
</dbReference>
<dbReference type="PROSITE" id="PS51740">
    <property type="entry name" value="SPOVT_ABRB"/>
    <property type="match status" value="1"/>
</dbReference>
<proteinExistence type="inferred from homology"/>
<feature type="chain" id="PRO_0000219870" description="Virulence-associated protein B">
    <location>
        <begin position="1"/>
        <end position="76"/>
    </location>
</feature>
<feature type="domain" description="SpoVT-AbrB" evidence="1">
    <location>
        <begin position="4"/>
        <end position="44"/>
    </location>
</feature>
<organism>
    <name type="scientific">Dichelobacter nodosus</name>
    <name type="common">Bacteroides nodosus</name>
    <dbReference type="NCBI Taxonomy" id="870"/>
    <lineage>
        <taxon>Bacteria</taxon>
        <taxon>Pseudomonadati</taxon>
        <taxon>Pseudomonadota</taxon>
        <taxon>Gammaproteobacteria</taxon>
        <taxon>Cardiobacteriales</taxon>
        <taxon>Cardiobacteriaceae</taxon>
        <taxon>Dichelobacter</taxon>
    </lineage>
</organism>
<accession>Q46558</accession>
<accession>Q46534</accession>
<accession>Q46568</accession>
<accession>Q46574</accession>
<sequence>MKVAKVFTTGRSQAVRIPKAFQFDTKEVIIQRFGNGILLIPKNSDWQGFLEALNEFEPDFKIEREPQIEQVREDFL</sequence>